<name>RPA2_MOUSE</name>
<reference key="1">
    <citation type="journal article" date="1996" name="Genomics">
        <title>Molecular cloning of RPA2, the gene encoding the second largest subunit of mouse RNA polymerase I.</title>
        <authorList>
            <person name="Seither P."/>
            <person name="Grummt I."/>
        </authorList>
    </citation>
    <scope>NUCLEOTIDE SEQUENCE [MRNA]</scope>
</reference>
<reference key="2">
    <citation type="journal article" date="2005" name="Science">
        <title>The transcriptional landscape of the mammalian genome.</title>
        <authorList>
            <person name="Carninci P."/>
            <person name="Kasukawa T."/>
            <person name="Katayama S."/>
            <person name="Gough J."/>
            <person name="Frith M.C."/>
            <person name="Maeda N."/>
            <person name="Oyama R."/>
            <person name="Ravasi T."/>
            <person name="Lenhard B."/>
            <person name="Wells C."/>
            <person name="Kodzius R."/>
            <person name="Shimokawa K."/>
            <person name="Bajic V.B."/>
            <person name="Brenner S.E."/>
            <person name="Batalov S."/>
            <person name="Forrest A.R."/>
            <person name="Zavolan M."/>
            <person name="Davis M.J."/>
            <person name="Wilming L.G."/>
            <person name="Aidinis V."/>
            <person name="Allen J.E."/>
            <person name="Ambesi-Impiombato A."/>
            <person name="Apweiler R."/>
            <person name="Aturaliya R.N."/>
            <person name="Bailey T.L."/>
            <person name="Bansal M."/>
            <person name="Baxter L."/>
            <person name="Beisel K.W."/>
            <person name="Bersano T."/>
            <person name="Bono H."/>
            <person name="Chalk A.M."/>
            <person name="Chiu K.P."/>
            <person name="Choudhary V."/>
            <person name="Christoffels A."/>
            <person name="Clutterbuck D.R."/>
            <person name="Crowe M.L."/>
            <person name="Dalla E."/>
            <person name="Dalrymple B.P."/>
            <person name="de Bono B."/>
            <person name="Della Gatta G."/>
            <person name="di Bernardo D."/>
            <person name="Down T."/>
            <person name="Engstrom P."/>
            <person name="Fagiolini M."/>
            <person name="Faulkner G."/>
            <person name="Fletcher C.F."/>
            <person name="Fukushima T."/>
            <person name="Furuno M."/>
            <person name="Futaki S."/>
            <person name="Gariboldi M."/>
            <person name="Georgii-Hemming P."/>
            <person name="Gingeras T.R."/>
            <person name="Gojobori T."/>
            <person name="Green R.E."/>
            <person name="Gustincich S."/>
            <person name="Harbers M."/>
            <person name="Hayashi Y."/>
            <person name="Hensch T.K."/>
            <person name="Hirokawa N."/>
            <person name="Hill D."/>
            <person name="Huminiecki L."/>
            <person name="Iacono M."/>
            <person name="Ikeo K."/>
            <person name="Iwama A."/>
            <person name="Ishikawa T."/>
            <person name="Jakt M."/>
            <person name="Kanapin A."/>
            <person name="Katoh M."/>
            <person name="Kawasawa Y."/>
            <person name="Kelso J."/>
            <person name="Kitamura H."/>
            <person name="Kitano H."/>
            <person name="Kollias G."/>
            <person name="Krishnan S.P."/>
            <person name="Kruger A."/>
            <person name="Kummerfeld S.K."/>
            <person name="Kurochkin I.V."/>
            <person name="Lareau L.F."/>
            <person name="Lazarevic D."/>
            <person name="Lipovich L."/>
            <person name="Liu J."/>
            <person name="Liuni S."/>
            <person name="McWilliam S."/>
            <person name="Madan Babu M."/>
            <person name="Madera M."/>
            <person name="Marchionni L."/>
            <person name="Matsuda H."/>
            <person name="Matsuzawa S."/>
            <person name="Miki H."/>
            <person name="Mignone F."/>
            <person name="Miyake S."/>
            <person name="Morris K."/>
            <person name="Mottagui-Tabar S."/>
            <person name="Mulder N."/>
            <person name="Nakano N."/>
            <person name="Nakauchi H."/>
            <person name="Ng P."/>
            <person name="Nilsson R."/>
            <person name="Nishiguchi S."/>
            <person name="Nishikawa S."/>
            <person name="Nori F."/>
            <person name="Ohara O."/>
            <person name="Okazaki Y."/>
            <person name="Orlando V."/>
            <person name="Pang K.C."/>
            <person name="Pavan W.J."/>
            <person name="Pavesi G."/>
            <person name="Pesole G."/>
            <person name="Petrovsky N."/>
            <person name="Piazza S."/>
            <person name="Reed J."/>
            <person name="Reid J.F."/>
            <person name="Ring B.Z."/>
            <person name="Ringwald M."/>
            <person name="Rost B."/>
            <person name="Ruan Y."/>
            <person name="Salzberg S.L."/>
            <person name="Sandelin A."/>
            <person name="Schneider C."/>
            <person name="Schoenbach C."/>
            <person name="Sekiguchi K."/>
            <person name="Semple C.A."/>
            <person name="Seno S."/>
            <person name="Sessa L."/>
            <person name="Sheng Y."/>
            <person name="Shibata Y."/>
            <person name="Shimada H."/>
            <person name="Shimada K."/>
            <person name="Silva D."/>
            <person name="Sinclair B."/>
            <person name="Sperling S."/>
            <person name="Stupka E."/>
            <person name="Sugiura K."/>
            <person name="Sultana R."/>
            <person name="Takenaka Y."/>
            <person name="Taki K."/>
            <person name="Tammoja K."/>
            <person name="Tan S.L."/>
            <person name="Tang S."/>
            <person name="Taylor M.S."/>
            <person name="Tegner J."/>
            <person name="Teichmann S.A."/>
            <person name="Ueda H.R."/>
            <person name="van Nimwegen E."/>
            <person name="Verardo R."/>
            <person name="Wei C.L."/>
            <person name="Yagi K."/>
            <person name="Yamanishi H."/>
            <person name="Zabarovsky E."/>
            <person name="Zhu S."/>
            <person name="Zimmer A."/>
            <person name="Hide W."/>
            <person name="Bult C."/>
            <person name="Grimmond S.M."/>
            <person name="Teasdale R.D."/>
            <person name="Liu E.T."/>
            <person name="Brusic V."/>
            <person name="Quackenbush J."/>
            <person name="Wahlestedt C."/>
            <person name="Mattick J.S."/>
            <person name="Hume D.A."/>
            <person name="Kai C."/>
            <person name="Sasaki D."/>
            <person name="Tomaru Y."/>
            <person name="Fukuda S."/>
            <person name="Kanamori-Katayama M."/>
            <person name="Suzuki M."/>
            <person name="Aoki J."/>
            <person name="Arakawa T."/>
            <person name="Iida J."/>
            <person name="Imamura K."/>
            <person name="Itoh M."/>
            <person name="Kato T."/>
            <person name="Kawaji H."/>
            <person name="Kawagashira N."/>
            <person name="Kawashima T."/>
            <person name="Kojima M."/>
            <person name="Kondo S."/>
            <person name="Konno H."/>
            <person name="Nakano K."/>
            <person name="Ninomiya N."/>
            <person name="Nishio T."/>
            <person name="Okada M."/>
            <person name="Plessy C."/>
            <person name="Shibata K."/>
            <person name="Shiraki T."/>
            <person name="Suzuki S."/>
            <person name="Tagami M."/>
            <person name="Waki K."/>
            <person name="Watahiki A."/>
            <person name="Okamura-Oho Y."/>
            <person name="Suzuki H."/>
            <person name="Kawai J."/>
            <person name="Hayashizaki Y."/>
        </authorList>
    </citation>
    <scope>NUCLEOTIDE SEQUENCE [LARGE SCALE MRNA]</scope>
    <source>
        <strain>C57BL/6J</strain>
        <tissue>Lung</tissue>
    </source>
</reference>
<reference key="3">
    <citation type="journal article" date="2009" name="PLoS Biol.">
        <title>Lineage-specific biology revealed by a finished genome assembly of the mouse.</title>
        <authorList>
            <person name="Church D.M."/>
            <person name="Goodstadt L."/>
            <person name="Hillier L.W."/>
            <person name="Zody M.C."/>
            <person name="Goldstein S."/>
            <person name="She X."/>
            <person name="Bult C.J."/>
            <person name="Agarwala R."/>
            <person name="Cherry J.L."/>
            <person name="DiCuccio M."/>
            <person name="Hlavina W."/>
            <person name="Kapustin Y."/>
            <person name="Meric P."/>
            <person name="Maglott D."/>
            <person name="Birtle Z."/>
            <person name="Marques A.C."/>
            <person name="Graves T."/>
            <person name="Zhou S."/>
            <person name="Teague B."/>
            <person name="Potamousis K."/>
            <person name="Churas C."/>
            <person name="Place M."/>
            <person name="Herschleb J."/>
            <person name="Runnheim R."/>
            <person name="Forrest D."/>
            <person name="Amos-Landgraf J."/>
            <person name="Schwartz D.C."/>
            <person name="Cheng Z."/>
            <person name="Lindblad-Toh K."/>
            <person name="Eichler E.E."/>
            <person name="Ponting C.P."/>
        </authorList>
    </citation>
    <scope>NUCLEOTIDE SEQUENCE [LARGE SCALE GENOMIC DNA]</scope>
    <source>
        <strain>C57BL/6J</strain>
    </source>
</reference>
<reference key="4">
    <citation type="submission" date="2005-07" db="EMBL/GenBank/DDBJ databases">
        <authorList>
            <person name="Mural R.J."/>
            <person name="Adams M.D."/>
            <person name="Myers E.W."/>
            <person name="Smith H.O."/>
            <person name="Venter J.C."/>
        </authorList>
    </citation>
    <scope>NUCLEOTIDE SEQUENCE [LARGE SCALE GENOMIC DNA]</scope>
</reference>
<reference key="5">
    <citation type="journal article" date="2010" name="Cell">
        <title>A tissue-specific atlas of mouse protein phosphorylation and expression.</title>
        <authorList>
            <person name="Huttlin E.L."/>
            <person name="Jedrychowski M.P."/>
            <person name="Elias J.E."/>
            <person name="Goswami T."/>
            <person name="Rad R."/>
            <person name="Beausoleil S.A."/>
            <person name="Villen J."/>
            <person name="Haas W."/>
            <person name="Sowa M.E."/>
            <person name="Gygi S.P."/>
        </authorList>
    </citation>
    <scope>IDENTIFICATION BY MASS SPECTROMETRY [LARGE SCALE ANALYSIS]</scope>
    <source>
        <tissue>Spleen</tissue>
        <tissue>Testis</tissue>
    </source>
</reference>
<reference key="6">
    <citation type="journal article" date="2018" name="Commun. Biol.">
        <title>Evolutionarily-conserved MZIP2 is essential for crossover formation in mammalian meiosis.</title>
        <authorList>
            <person name="Zhang Q."/>
            <person name="Shao J."/>
            <person name="Fan H.Y."/>
            <person name="Yu C."/>
        </authorList>
    </citation>
    <scope>SUBCELLULAR LOCATION</scope>
</reference>
<reference key="7">
    <citation type="journal article" date="2019" name="Nucleic Acids Res.">
        <title>SCRE serves as a unique synaptonemal complex fastener and is essential for progression of meiosis prophase I in mice.</title>
        <authorList>
            <person name="Liu H."/>
            <person name="Huang T."/>
            <person name="Li M."/>
            <person name="Li M."/>
            <person name="Zhang C."/>
            <person name="Jiang J."/>
            <person name="Yu X."/>
            <person name="Yin Y."/>
            <person name="Zhang F."/>
            <person name="Lu G."/>
            <person name="Luo M.C."/>
            <person name="Zhang L.R."/>
            <person name="Li J."/>
            <person name="Liu K."/>
            <person name="Chen Z.J."/>
        </authorList>
    </citation>
    <scope>SUBCELLULAR LOCATION</scope>
</reference>
<reference key="8">
    <citation type="journal article" date="2019" name="Sci. Adv.">
        <title>SPO16 binds SHOC1 to promote homologous recombination and crossing-over in meiotic prophase I.</title>
        <authorList>
            <person name="Zhang Q."/>
            <person name="Ji S.Y."/>
            <person name="Busayavalasa K."/>
            <person name="Yu C."/>
        </authorList>
    </citation>
    <scope>SUBCELLULAR LOCATION</scope>
</reference>
<dbReference type="EC" id="2.7.7.6" evidence="4"/>
<dbReference type="EMBL" id="U58280">
    <property type="protein sequence ID" value="AAC52850.1"/>
    <property type="molecule type" value="mRNA"/>
</dbReference>
<dbReference type="EMBL" id="AK143501">
    <property type="protein sequence ID" value="BAE25401.1"/>
    <property type="molecule type" value="mRNA"/>
</dbReference>
<dbReference type="EMBL" id="AK144616">
    <property type="protein sequence ID" value="BAE25971.1"/>
    <property type="molecule type" value="mRNA"/>
</dbReference>
<dbReference type="EMBL" id="AL833780">
    <property type="status" value="NOT_ANNOTATED_CDS"/>
    <property type="molecule type" value="Genomic_DNA"/>
</dbReference>
<dbReference type="EMBL" id="BX000699">
    <property type="status" value="NOT_ANNOTATED_CDS"/>
    <property type="molecule type" value="Genomic_DNA"/>
</dbReference>
<dbReference type="EMBL" id="CH466519">
    <property type="protein sequence ID" value="EDL28227.1"/>
    <property type="molecule type" value="Genomic_DNA"/>
</dbReference>
<dbReference type="CCDS" id="CCDS16720.1"/>
<dbReference type="PIR" id="T42723">
    <property type="entry name" value="T42723"/>
</dbReference>
<dbReference type="RefSeq" id="NP_033112.2">
    <property type="nucleotide sequence ID" value="NM_009086.2"/>
</dbReference>
<dbReference type="SMR" id="P70700"/>
<dbReference type="BioGRID" id="202993">
    <property type="interactions" value="8"/>
</dbReference>
<dbReference type="FunCoup" id="P70700">
    <property type="interactions" value="3085"/>
</dbReference>
<dbReference type="IntAct" id="P70700">
    <property type="interactions" value="2"/>
</dbReference>
<dbReference type="STRING" id="10090.ENSMUSP00000099494"/>
<dbReference type="iPTMnet" id="P70700"/>
<dbReference type="PhosphoSitePlus" id="P70700"/>
<dbReference type="PaxDb" id="10090-ENSMUSP00000099494"/>
<dbReference type="PeptideAtlas" id="P70700"/>
<dbReference type="ProteomicsDB" id="260919"/>
<dbReference type="Pumba" id="P70700"/>
<dbReference type="Antibodypedia" id="18109">
    <property type="antibodies" value="126 antibodies from 25 providers"/>
</dbReference>
<dbReference type="DNASU" id="20017"/>
<dbReference type="Ensembl" id="ENSMUST00000103205.11">
    <property type="protein sequence ID" value="ENSMUSP00000099494.5"/>
    <property type="gene ID" value="ENSMUSG00000027395.16"/>
</dbReference>
<dbReference type="GeneID" id="20017"/>
<dbReference type="KEGG" id="mmu:20017"/>
<dbReference type="UCSC" id="uc008mhf.2">
    <property type="organism name" value="mouse"/>
</dbReference>
<dbReference type="AGR" id="MGI:108014"/>
<dbReference type="CTD" id="84172"/>
<dbReference type="MGI" id="MGI:108014">
    <property type="gene designation" value="Polr1b"/>
</dbReference>
<dbReference type="VEuPathDB" id="HostDB:ENSMUSG00000027395"/>
<dbReference type="eggNOG" id="KOG0216">
    <property type="taxonomic scope" value="Eukaryota"/>
</dbReference>
<dbReference type="GeneTree" id="ENSGT00950000183132"/>
<dbReference type="HOGENOM" id="CLU_000524_5_1_1"/>
<dbReference type="InParanoid" id="P70700"/>
<dbReference type="OMA" id="FFGVVHY"/>
<dbReference type="OrthoDB" id="10248617at2759"/>
<dbReference type="PhylomeDB" id="P70700"/>
<dbReference type="TreeFam" id="TF103055"/>
<dbReference type="Reactome" id="R-MMU-5250924">
    <property type="pathway name" value="B-WICH complex positively regulates rRNA expression"/>
</dbReference>
<dbReference type="Reactome" id="R-MMU-73762">
    <property type="pathway name" value="RNA Polymerase I Transcription Initiation"/>
</dbReference>
<dbReference type="Reactome" id="R-MMU-73772">
    <property type="pathway name" value="RNA Polymerase I Promoter Escape"/>
</dbReference>
<dbReference type="Reactome" id="R-MMU-73863">
    <property type="pathway name" value="RNA Polymerase I Transcription Termination"/>
</dbReference>
<dbReference type="BioGRID-ORCS" id="20017">
    <property type="hits" value="28 hits in 78 CRISPR screens"/>
</dbReference>
<dbReference type="ChiTaRS" id="Polr1b">
    <property type="organism name" value="mouse"/>
</dbReference>
<dbReference type="PRO" id="PR:P70700"/>
<dbReference type="Proteomes" id="UP000000589">
    <property type="component" value="Chromosome 2"/>
</dbReference>
<dbReference type="RNAct" id="P70700">
    <property type="molecule type" value="protein"/>
</dbReference>
<dbReference type="Bgee" id="ENSMUSG00000027395">
    <property type="expression patterns" value="Expressed in ileal epithelium and 206 other cell types or tissues"/>
</dbReference>
<dbReference type="ExpressionAtlas" id="P70700">
    <property type="expression patterns" value="baseline and differential"/>
</dbReference>
<dbReference type="GO" id="GO:0005694">
    <property type="term" value="C:chromosome"/>
    <property type="evidence" value="ECO:0000314"/>
    <property type="project" value="UniProtKB"/>
</dbReference>
<dbReference type="GO" id="GO:0005829">
    <property type="term" value="C:cytosol"/>
    <property type="evidence" value="ECO:0007669"/>
    <property type="project" value="Ensembl"/>
</dbReference>
<dbReference type="GO" id="GO:0001650">
    <property type="term" value="C:fibrillar center"/>
    <property type="evidence" value="ECO:0007669"/>
    <property type="project" value="Ensembl"/>
</dbReference>
<dbReference type="GO" id="GO:0005739">
    <property type="term" value="C:mitochondrion"/>
    <property type="evidence" value="ECO:0007669"/>
    <property type="project" value="GOC"/>
</dbReference>
<dbReference type="GO" id="GO:0005730">
    <property type="term" value="C:nucleolus"/>
    <property type="evidence" value="ECO:0000314"/>
    <property type="project" value="MGI"/>
</dbReference>
<dbReference type="GO" id="GO:0005654">
    <property type="term" value="C:nucleoplasm"/>
    <property type="evidence" value="ECO:0000304"/>
    <property type="project" value="Reactome"/>
</dbReference>
<dbReference type="GO" id="GO:0005634">
    <property type="term" value="C:nucleus"/>
    <property type="evidence" value="ECO:0000314"/>
    <property type="project" value="MGI"/>
</dbReference>
<dbReference type="GO" id="GO:0005736">
    <property type="term" value="C:RNA polymerase I complex"/>
    <property type="evidence" value="ECO:0000314"/>
    <property type="project" value="MGI"/>
</dbReference>
<dbReference type="GO" id="GO:0003677">
    <property type="term" value="F:DNA binding"/>
    <property type="evidence" value="ECO:0007669"/>
    <property type="project" value="InterPro"/>
</dbReference>
<dbReference type="GO" id="GO:0003899">
    <property type="term" value="F:DNA-directed RNA polymerase activity"/>
    <property type="evidence" value="ECO:0000250"/>
    <property type="project" value="UniProtKB"/>
</dbReference>
<dbReference type="GO" id="GO:0071667">
    <property type="term" value="F:DNA/RNA hybrid binding"/>
    <property type="evidence" value="ECO:0007669"/>
    <property type="project" value="Ensembl"/>
</dbReference>
<dbReference type="GO" id="GO:0032549">
    <property type="term" value="F:ribonucleoside binding"/>
    <property type="evidence" value="ECO:0007669"/>
    <property type="project" value="InterPro"/>
</dbReference>
<dbReference type="GO" id="GO:0008270">
    <property type="term" value="F:zinc ion binding"/>
    <property type="evidence" value="ECO:0007669"/>
    <property type="project" value="UniProtKB-KW"/>
</dbReference>
<dbReference type="GO" id="GO:0007566">
    <property type="term" value="P:embryo implantation"/>
    <property type="evidence" value="ECO:0000315"/>
    <property type="project" value="MGI"/>
</dbReference>
<dbReference type="GO" id="GO:0014029">
    <property type="term" value="P:neural crest formation"/>
    <property type="evidence" value="ECO:0000250"/>
    <property type="project" value="UniProtKB"/>
</dbReference>
<dbReference type="GO" id="GO:0017126">
    <property type="term" value="P:nucleologenesis"/>
    <property type="evidence" value="ECO:0000315"/>
    <property type="project" value="MGI"/>
</dbReference>
<dbReference type="GO" id="GO:0009303">
    <property type="term" value="P:rRNA transcription"/>
    <property type="evidence" value="ECO:0000315"/>
    <property type="project" value="MGI"/>
</dbReference>
<dbReference type="CDD" id="cd00653">
    <property type="entry name" value="RNA_pol_B_RPB2"/>
    <property type="match status" value="1"/>
</dbReference>
<dbReference type="FunFam" id="2.40.270.10:FF:000006">
    <property type="entry name" value="DNA-directed RNA polymerase subunit beta"/>
    <property type="match status" value="1"/>
</dbReference>
<dbReference type="FunFam" id="2.40.270.10:FF:000011">
    <property type="entry name" value="DNA-directed RNA polymerase subunit beta"/>
    <property type="match status" value="1"/>
</dbReference>
<dbReference type="FunFam" id="2.40.50.150:FF:000004">
    <property type="entry name" value="DNA-directed RNA polymerase subunit beta"/>
    <property type="match status" value="1"/>
</dbReference>
<dbReference type="FunFam" id="3.90.1070.20:FF:000003">
    <property type="entry name" value="DNA-directed RNA polymerase subunit beta"/>
    <property type="match status" value="1"/>
</dbReference>
<dbReference type="FunFam" id="3.90.1100.10:FF:000008">
    <property type="entry name" value="DNA-directed RNA polymerase subunit beta"/>
    <property type="match status" value="1"/>
</dbReference>
<dbReference type="FunFam" id="3.90.1100.10:FF:000016">
    <property type="entry name" value="DNA-directed RNA polymerase subunit beta"/>
    <property type="match status" value="1"/>
</dbReference>
<dbReference type="FunFam" id="3.90.1110.10:FF:000008">
    <property type="entry name" value="DNA-directed RNA polymerase subunit beta"/>
    <property type="match status" value="1"/>
</dbReference>
<dbReference type="FunFam" id="3.90.1800.10:FF:000004">
    <property type="entry name" value="DNA-directed RNA polymerase subunit beta"/>
    <property type="match status" value="1"/>
</dbReference>
<dbReference type="Gene3D" id="2.40.50.150">
    <property type="match status" value="1"/>
</dbReference>
<dbReference type="Gene3D" id="3.90.1070.20">
    <property type="match status" value="1"/>
</dbReference>
<dbReference type="Gene3D" id="3.90.1100.10">
    <property type="match status" value="1"/>
</dbReference>
<dbReference type="Gene3D" id="2.40.270.10">
    <property type="entry name" value="DNA-directed RNA polymerase, subunit 2, domain 6"/>
    <property type="match status" value="1"/>
</dbReference>
<dbReference type="Gene3D" id="3.90.1800.10">
    <property type="entry name" value="RNA polymerase alpha subunit dimerisation domain"/>
    <property type="match status" value="1"/>
</dbReference>
<dbReference type="Gene3D" id="3.90.1110.10">
    <property type="entry name" value="RNA polymerase Rpb2, domain 2"/>
    <property type="match status" value="1"/>
</dbReference>
<dbReference type="InterPro" id="IPR015712">
    <property type="entry name" value="DNA-dir_RNA_pol_su2"/>
</dbReference>
<dbReference type="InterPro" id="IPR007120">
    <property type="entry name" value="DNA-dir_RNAP_su2_dom"/>
</dbReference>
<dbReference type="InterPro" id="IPR037033">
    <property type="entry name" value="DNA-dir_RNAP_su2_hyb_sf"/>
</dbReference>
<dbReference type="InterPro" id="IPR007121">
    <property type="entry name" value="RNA_pol_bsu_CS"/>
</dbReference>
<dbReference type="InterPro" id="IPR007644">
    <property type="entry name" value="RNA_pol_bsu_protrusion"/>
</dbReference>
<dbReference type="InterPro" id="IPR007642">
    <property type="entry name" value="RNA_pol_Rpb2_2"/>
</dbReference>
<dbReference type="InterPro" id="IPR037034">
    <property type="entry name" value="RNA_pol_Rpb2_2_sf"/>
</dbReference>
<dbReference type="InterPro" id="IPR007645">
    <property type="entry name" value="RNA_pol_Rpb2_3"/>
</dbReference>
<dbReference type="InterPro" id="IPR007641">
    <property type="entry name" value="RNA_pol_Rpb2_7"/>
</dbReference>
<dbReference type="InterPro" id="IPR014724">
    <property type="entry name" value="RNA_pol_RPB2_OB-fold"/>
</dbReference>
<dbReference type="InterPro" id="IPR009674">
    <property type="entry name" value="Rpa2_dom_4"/>
</dbReference>
<dbReference type="PANTHER" id="PTHR20856">
    <property type="entry name" value="DNA-DIRECTED RNA POLYMERASE I SUBUNIT 2"/>
    <property type="match status" value="1"/>
</dbReference>
<dbReference type="Pfam" id="PF06883">
    <property type="entry name" value="RNA_pol_Rpa2_4"/>
    <property type="match status" value="1"/>
</dbReference>
<dbReference type="Pfam" id="PF04563">
    <property type="entry name" value="RNA_pol_Rpb2_1"/>
    <property type="match status" value="1"/>
</dbReference>
<dbReference type="Pfam" id="PF04561">
    <property type="entry name" value="RNA_pol_Rpb2_2"/>
    <property type="match status" value="1"/>
</dbReference>
<dbReference type="Pfam" id="PF04565">
    <property type="entry name" value="RNA_pol_Rpb2_3"/>
    <property type="match status" value="1"/>
</dbReference>
<dbReference type="Pfam" id="PF00562">
    <property type="entry name" value="RNA_pol_Rpb2_6"/>
    <property type="match status" value="1"/>
</dbReference>
<dbReference type="Pfam" id="PF04560">
    <property type="entry name" value="RNA_pol_Rpb2_7"/>
    <property type="match status" value="1"/>
</dbReference>
<dbReference type="SUPFAM" id="SSF64484">
    <property type="entry name" value="beta and beta-prime subunits of DNA dependent RNA-polymerase"/>
    <property type="match status" value="1"/>
</dbReference>
<dbReference type="PROSITE" id="PS01166">
    <property type="entry name" value="RNA_POL_BETA"/>
    <property type="match status" value="1"/>
</dbReference>
<sequence length="1135" mass="128213">MDVDGRWRNLPSGPSLKHLTDPSYGIPPEQQKAALQDLTRAHVDSFNYAALEGLSHAVQAIPPFEFAFKDERISLTIVDAVISPPSVPKGTICKDLNVYPAECRGRKSTYRGRLTADISWAVNGVPKGIIKQFLGYVPIMVKSKLCNLYNLPPRVLIEHHEEAEEMGGYFIINGIEKVIRMLIVPRRNFPIAMVRPKWKSRGLGYTQFGVSMRCVREEHSAVNMNLHYVENGTVMLNFIYRKELFFLPLGFALKALVSFSDYQIFQELIKGKEEDSFFRNSVSQMLRIVIEEGCHSQKQVLNYLGECFRVKLSLPDWYPNVEAAEFLLNQCICIHLQSNTDKFYLLCLMTRKLFALARGECMDDNPDSLVNQEVLSPGQLFLMFLKEKMENWLVSIKIVLDKRAQKANVSINNENLMKIFSMGTELTRPFEYLLATGNLRSKTGLGFLQDSGLCVVADKLNFLRYLSHFRCVHRGAAFAKMRTTTVRRLLPESWGFLCPVHTPDGAPCGLLNHLTAVCEVVTKFVYTASIPALLCGLGVTPVDTAPCRPYSDCYPVLLDGVMVGWVDKDLAPEVADTLRRFKVLREKRIPPWMEVALIPMTGKPSLYPGLFLFTTPCRLVRPVQNLELGREELIGTMEQLFMNVAIFEDEVFGGISTHQELFPHSLLSVIANFIPFSDHNQSPRNMYQCQMGKQTMGFPLLTYQNRSDNKLYRLQTPQSPLVRPCMYDFYDMDNYPIGTNAIVAVISYTGYDMEDAMIVNKASWERGFAHGSVYKSEFIDLSEKFKQGEDNLVFGVKPGDPRVMQKLDDDGLPFIGAKLEYGDPYYSYLNLNTGEGFVVYYKSKENCVVDNIKVCSNDMGSGKFKCICITVRIPRNPTIGDKFASRHGQKGILSRLWPAEDMPFTESGMMPDILFNPHGFPSRMTIGMLIESMAGKSAALHGLCHDATPFIFSEENSALEYFGEMLKAAGYNFYGTERLYSGISGMELEADIFIGVVYYQRLRHMVSDKFQVRTTGARDKVTNQPLGGRNVQGGIRFGEMERDALLAHGTSFLLHDRLFNCSDRSVAHMCVECGSLLSPLLEKPPPSWSAMRNRKYNCTVCGRSDTIDTVSVPYVFRYFVAELAAMNIKVKLDVI</sequence>
<organism>
    <name type="scientific">Mus musculus</name>
    <name type="common">Mouse</name>
    <dbReference type="NCBI Taxonomy" id="10090"/>
    <lineage>
        <taxon>Eukaryota</taxon>
        <taxon>Metazoa</taxon>
        <taxon>Chordata</taxon>
        <taxon>Craniata</taxon>
        <taxon>Vertebrata</taxon>
        <taxon>Euteleostomi</taxon>
        <taxon>Mammalia</taxon>
        <taxon>Eutheria</taxon>
        <taxon>Euarchontoglires</taxon>
        <taxon>Glires</taxon>
        <taxon>Rodentia</taxon>
        <taxon>Myomorpha</taxon>
        <taxon>Muroidea</taxon>
        <taxon>Muridae</taxon>
        <taxon>Murinae</taxon>
        <taxon>Mus</taxon>
        <taxon>Mus</taxon>
    </lineage>
</organism>
<gene>
    <name evidence="10" type="primary">Polr1b</name>
    <name type="synonym">Rpa2</name>
    <name type="synonym">Rpo1-2</name>
</gene>
<keyword id="KW-0158">Chromosome</keyword>
<keyword id="KW-0240">DNA-directed RNA polymerase</keyword>
<keyword id="KW-0460">Magnesium</keyword>
<keyword id="KW-0479">Metal-binding</keyword>
<keyword id="KW-0548">Nucleotidyltransferase</keyword>
<keyword id="KW-0539">Nucleus</keyword>
<keyword id="KW-0597">Phosphoprotein</keyword>
<keyword id="KW-1185">Reference proteome</keyword>
<keyword id="KW-0804">Transcription</keyword>
<keyword id="KW-0808">Transferase</keyword>
<keyword id="KW-0862">Zinc</keyword>
<keyword id="KW-0863">Zinc-finger</keyword>
<accession>P70700</accession>
<accession>Q3UMX7</accession>
<evidence type="ECO:0000250" key="1">
    <source>
        <dbReference type="UniProtKB" id="P08518"/>
    </source>
</evidence>
<evidence type="ECO:0000250" key="2">
    <source>
        <dbReference type="UniProtKB" id="P10964"/>
    </source>
</evidence>
<evidence type="ECO:0000250" key="3">
    <source>
        <dbReference type="UniProtKB" id="P30876"/>
    </source>
</evidence>
<evidence type="ECO:0000250" key="4">
    <source>
        <dbReference type="UniProtKB" id="Q9H9Y6"/>
    </source>
</evidence>
<evidence type="ECO:0000256" key="5">
    <source>
        <dbReference type="SAM" id="MobiDB-lite"/>
    </source>
</evidence>
<evidence type="ECO:0000269" key="6">
    <source>
    </source>
</evidence>
<evidence type="ECO:0000269" key="7">
    <source>
    </source>
</evidence>
<evidence type="ECO:0000269" key="8">
    <source>
    </source>
</evidence>
<evidence type="ECO:0000305" key="9"/>
<evidence type="ECO:0000312" key="10">
    <source>
        <dbReference type="MGI" id="MGI:108014"/>
    </source>
</evidence>
<comment type="function">
    <text evidence="2 4">Catalytic core component of RNA polymerase I (Pol I), a DNA-dependent RNA polymerase which synthesizes ribosomal RNA precursors using the four ribonucleoside triphosphates as substrates. Transcribes 47S pre-rRNAs from multicopy rRNA gene clusters, giving rise to 5.8S, 18S and 28S ribosomal RNAs (By similarity). Pol I-mediated transcription cycle proceeds through transcription initiation, transcription elongation and transcription termination stages. During transcription initiation, Pol I pre-initiation complex (PIC) is recruited by the selectivity factor 1 (SL1/TIF-IB) complex bound to the core promoter that precedes an rDNA repeat unit. The PIC assembly bends the promoter favoring the formation of the transcription bubble and promoter escape. Once the polymerase has escaped from the promoter it enters the elongation phase during which RNA is actively polymerized, based on complementarity with the template DNA strand. Highly processive, assembles in structures referred to as 'Miller trees' where many elongating Pol I complexes queue and transcribe the same rDNA coding regions. At terminator sequences downstream of the rDNA gene, PTRF interacts with Pol I and halts Pol I transcription leading to the release of the RNA transcript and polymerase from the DNA (By similarity). Forms Pol I active center together with the largest subunit POLR1A/RPA1. Appends one nucleotide at a time to the 3' end of the nascent RNA, with POLR1A/RPA1 contributing a Mg(2+)-coordinating DxDGD motif, and POLR1B/RPA2 participating in the coordination of a second Mg(2+) ion and providing lysine residues believed to facilitate Watson-Crick base pairing between the incoming nucleotide and the template base. Typically, Mg(2+) ions direct a 5' nucleoside triphosphate to form a phosphodiester bond with the 3' hydroxyl of the preceding nucleotide of the nascent RNA, with the elimination of pyrophosphate. Has proofreading activity: Pauses and backtracks to allow the cleavage of a missincorporated nucleotide via POLR1H/RPA12. High Pol I processivity is associated with decreased transcription fidelity (By similarity).</text>
</comment>
<comment type="catalytic activity">
    <reaction evidence="4">
        <text>RNA(n) + a ribonucleoside 5'-triphosphate = RNA(n+1) + diphosphate</text>
        <dbReference type="Rhea" id="RHEA:21248"/>
        <dbReference type="Rhea" id="RHEA-COMP:14527"/>
        <dbReference type="Rhea" id="RHEA-COMP:17342"/>
        <dbReference type="ChEBI" id="CHEBI:33019"/>
        <dbReference type="ChEBI" id="CHEBI:61557"/>
        <dbReference type="ChEBI" id="CHEBI:140395"/>
        <dbReference type="EC" id="2.7.7.6"/>
    </reaction>
    <physiologicalReaction direction="left-to-right" evidence="4">
        <dbReference type="Rhea" id="RHEA:21249"/>
    </physiologicalReaction>
</comment>
<comment type="cofactor">
    <cofactor evidence="1 3">
        <name>Mg(2+)</name>
        <dbReference type="ChEBI" id="CHEBI:18420"/>
    </cofactor>
    <text evidence="1 3">Two Mg(2+) ions are coordinated by both the catalytic residues and the nucleic acid substrate to enhance substrate recognition and catalytic efficiency.</text>
</comment>
<comment type="subunit">
    <text evidence="4">Component of the RNA polymerase I (Pol I) complex consisting of 13 subunits: a ten-subunit catalytic core composed of POLR1A/RPA1, POLR1B/RPA2, POLR1C/RPAC1, POLR1D/RPAC2, POLR1H/RPA12, POLR2E/RPABC1, POLR2F/RPABC2, POLR2H/RPABC3, POLR2K/RPABC4 and POLR2L/RPABC5; a mobile stalk subunit POLR1F/RPA43 protruding from the core and additional subunits homologous to general transcription factors POLR1E/RPA49 and POLR1G/RPA34. Part of Pol I pre-initiation complex (PIC), in which Pol I core assembles with RRN3 and promoter-bound UTBF and SL1/TIF-IB complex.</text>
</comment>
<comment type="subcellular location">
    <subcellularLocation>
        <location evidence="4">Nucleus</location>
        <location evidence="4">Nucleolus</location>
    </subcellularLocation>
    <subcellularLocation>
        <location evidence="6 7 8">Chromosome</location>
    </subcellularLocation>
</comment>
<comment type="domain">
    <text evidence="4">The active site comprises the fork loops, the loops and the rudder that stabilize the transcription bubble and assist polymerase translocation.</text>
</comment>
<comment type="similarity">
    <text evidence="9">Belongs to the RNA polymerase beta chain family.</text>
</comment>
<protein>
    <recommendedName>
        <fullName>DNA-directed RNA polymerase I subunit RPA2</fullName>
        <shortName>RNA polymerase I subunit 2</shortName>
        <ecNumber evidence="4">2.7.7.6</ecNumber>
    </recommendedName>
    <alternativeName>
        <fullName>DNA-directed RNA polymerase I 135 kDa polypeptide</fullName>
        <shortName>RPA135</shortName>
    </alternativeName>
</protein>
<feature type="chain" id="PRO_0000048073" description="DNA-directed RNA polymerase I subunit RPA2">
    <location>
        <begin position="1"/>
        <end position="1135"/>
    </location>
</feature>
<feature type="zinc finger region" description="C4-type" evidence="4">
    <location>
        <begin position="1070"/>
        <end position="1101"/>
    </location>
</feature>
<feature type="region of interest" description="Disordered" evidence="5">
    <location>
        <begin position="1"/>
        <end position="26"/>
    </location>
</feature>
<feature type="region of interest" description="Loop B" evidence="4">
    <location>
        <begin position="194"/>
        <end position="208"/>
    </location>
</feature>
<feature type="region of interest" description="Loop A" evidence="4">
    <location>
        <begin position="236"/>
        <end position="247"/>
    </location>
</feature>
<feature type="region of interest" description="Fork loop 1" evidence="4">
    <location>
        <begin position="439"/>
        <end position="453"/>
    </location>
</feature>
<feature type="region of interest" description="Fork loop 2" evidence="4">
    <location>
        <begin position="474"/>
        <end position="489"/>
    </location>
</feature>
<feature type="binding site" evidence="4">
    <location>
        <position position="180"/>
    </location>
    <ligand>
        <name>RNA</name>
        <dbReference type="ChEBI" id="CHEBI:33697"/>
    </ligand>
</feature>
<feature type="binding site" evidence="4">
    <location>
        <position position="367"/>
    </location>
    <ligand>
        <name>RNA</name>
        <dbReference type="ChEBI" id="CHEBI:33697"/>
    </ligand>
</feature>
<feature type="binding site" evidence="1 3">
    <location>
        <position position="755"/>
    </location>
    <ligand>
        <name>Mg(2+)</name>
        <dbReference type="ChEBI" id="CHEBI:18420"/>
        <note>ligand shared with POLR1A/RPA1</note>
    </ligand>
</feature>
<feature type="binding site" evidence="4">
    <location>
        <position position="890"/>
    </location>
    <ligand>
        <name>RNA</name>
        <dbReference type="ChEBI" id="CHEBI:33697"/>
    </ligand>
</feature>
<feature type="binding site" evidence="4">
    <location>
        <position position="1020"/>
    </location>
    <ligand>
        <name>DNA</name>
        <dbReference type="ChEBI" id="CHEBI:16991"/>
        <label>nontemplate strand</label>
    </ligand>
</feature>
<feature type="binding site" evidence="4">
    <location>
        <position position="1036"/>
    </location>
    <ligand>
        <name>DNA</name>
        <dbReference type="ChEBI" id="CHEBI:16991"/>
        <label>template strand</label>
    </ligand>
</feature>
<feature type="binding site" evidence="4">
    <location>
        <position position="1070"/>
    </location>
    <ligand>
        <name>Zn(2+)</name>
        <dbReference type="ChEBI" id="CHEBI:29105"/>
    </ligand>
</feature>
<feature type="binding site" evidence="4">
    <location>
        <position position="1073"/>
    </location>
    <ligand>
        <name>Zn(2+)</name>
        <dbReference type="ChEBI" id="CHEBI:29105"/>
    </ligand>
</feature>
<feature type="binding site" evidence="4">
    <location>
        <position position="1098"/>
    </location>
    <ligand>
        <name>Zn(2+)</name>
        <dbReference type="ChEBI" id="CHEBI:29105"/>
    </ligand>
</feature>
<feature type="binding site" evidence="4">
    <location>
        <position position="1101"/>
    </location>
    <ligand>
        <name>Zn(2+)</name>
        <dbReference type="ChEBI" id="CHEBI:29105"/>
    </ligand>
</feature>
<feature type="site" description="Active site gating; blocks backward movement of nascent RNA" evidence="4">
    <location>
        <position position="687"/>
    </location>
</feature>
<feature type="modified residue" description="Phosphoserine" evidence="4">
    <location>
        <position position="1051"/>
    </location>
</feature>
<feature type="sequence conflict" description="In Ref. 1; AAC52850." evidence="9" ref="1">
    <original>V</original>
    <variation>E</variation>
    <location>
        <position position="184"/>
    </location>
</feature>
<feature type="sequence conflict" description="In Ref. 1; AAC52850." evidence="9" ref="1">
    <original>I</original>
    <variation>V</variation>
    <location>
        <position position="191"/>
    </location>
</feature>
<feature type="sequence conflict" description="In Ref. 1; AAC52850." evidence="9" ref="1">
    <original>C</original>
    <variation>G</variation>
    <location>
        <position position="331"/>
    </location>
</feature>
<feature type="sequence conflict" description="In Ref. 1; AAC52850." evidence="9" ref="1">
    <original>L</original>
    <variation>R</variation>
    <location>
        <position position="346"/>
    </location>
</feature>
<feature type="sequence conflict" description="In Ref. 1; AAC52850." evidence="9" ref="1">
    <original>Q</original>
    <variation>E</variation>
    <location>
        <position position="449"/>
    </location>
</feature>
<feature type="sequence conflict" description="In Ref. 1; AAC52850." evidence="9" ref="1">
    <original>VY</original>
    <variation>GD</variation>
    <location>
        <begin position="525"/>
        <end position="526"/>
    </location>
</feature>
<feature type="sequence conflict" description="In Ref. 1; AAC52850." evidence="9" ref="1">
    <original>PV</original>
    <variation>GA</variation>
    <location>
        <begin position="541"/>
        <end position="542"/>
    </location>
</feature>
<feature type="sequence conflict" description="In Ref. 1; AAC52850." evidence="9" ref="1">
    <original>F</original>
    <variation>S</variation>
    <location>
        <position position="814"/>
    </location>
</feature>
<feature type="sequence conflict" description="In Ref. 1; AAC52850." evidence="9" ref="1">
    <original>M</original>
    <variation>V</variation>
    <location>
        <position position="1069"/>
    </location>
</feature>
<proteinExistence type="evidence at protein level"/>